<feature type="chain" id="PRO_0000156087" description="Putative methylthioribose-1-phosphate isomerase">
    <location>
        <begin position="1"/>
        <end position="311"/>
    </location>
</feature>
<feature type="active site" description="Proton donor" evidence="1">
    <location>
        <position position="215"/>
    </location>
</feature>
<feature type="binding site" evidence="1">
    <location>
        <begin position="46"/>
        <end position="48"/>
    </location>
    <ligand>
        <name>substrate</name>
    </ligand>
</feature>
<feature type="binding site" evidence="1">
    <location>
        <position position="80"/>
    </location>
    <ligand>
        <name>substrate</name>
    </ligand>
</feature>
<feature type="binding site" evidence="1">
    <location>
        <position position="174"/>
    </location>
    <ligand>
        <name>substrate</name>
    </ligand>
</feature>
<feature type="binding site" evidence="1">
    <location>
        <begin position="224"/>
        <end position="225"/>
    </location>
    <ligand>
        <name>substrate</name>
    </ligand>
</feature>
<feature type="site" description="Transition state stabilizer" evidence="1">
    <location>
        <position position="135"/>
    </location>
</feature>
<protein>
    <recommendedName>
        <fullName evidence="1">Putative methylthioribose-1-phosphate isomerase</fullName>
        <shortName evidence="1">M1Pi</shortName>
        <shortName evidence="1">MTR-1-P isomerase</shortName>
        <ecNumber evidence="1">5.3.1.23</ecNumber>
    </recommendedName>
    <alternativeName>
        <fullName evidence="1">MTNA-like protein</fullName>
        <shortName evidence="1">aMTNA</shortName>
    </alternativeName>
    <alternativeName>
        <fullName evidence="1">S-methyl-5-thioribose-1-phosphate isomerase</fullName>
    </alternativeName>
</protein>
<organism>
    <name type="scientific">Methanothermobacter thermautotrophicus (strain ATCC 29096 / DSM 1053 / JCM 10044 / NBRC 100330 / Delta H)</name>
    <name type="common">Methanobacterium thermoautotrophicum</name>
    <dbReference type="NCBI Taxonomy" id="187420"/>
    <lineage>
        <taxon>Archaea</taxon>
        <taxon>Methanobacteriati</taxon>
        <taxon>Methanobacteriota</taxon>
        <taxon>Methanomada group</taxon>
        <taxon>Methanobacteria</taxon>
        <taxon>Methanobacteriales</taxon>
        <taxon>Methanobacteriaceae</taxon>
        <taxon>Methanothermobacter</taxon>
    </lineage>
</organism>
<name>MTNA_METTH</name>
<dbReference type="EC" id="5.3.1.23" evidence="1"/>
<dbReference type="EMBL" id="AE000666">
    <property type="protein sequence ID" value="AAB86338.1"/>
    <property type="molecule type" value="Genomic_DNA"/>
</dbReference>
<dbReference type="PIR" id="E69117">
    <property type="entry name" value="E69117"/>
</dbReference>
<dbReference type="SMR" id="O27900"/>
<dbReference type="FunCoup" id="O27900">
    <property type="interactions" value="183"/>
</dbReference>
<dbReference type="STRING" id="187420.MTH_1872"/>
<dbReference type="PaxDb" id="187420-MTH_1872"/>
<dbReference type="EnsemblBacteria" id="AAB86338">
    <property type="protein sequence ID" value="AAB86338"/>
    <property type="gene ID" value="MTH_1872"/>
</dbReference>
<dbReference type="KEGG" id="mth:MTH_1872"/>
<dbReference type="PATRIC" id="fig|187420.15.peg.1827"/>
<dbReference type="HOGENOM" id="CLU_016218_1_2_2"/>
<dbReference type="InParanoid" id="O27900"/>
<dbReference type="Proteomes" id="UP000005223">
    <property type="component" value="Chromosome"/>
</dbReference>
<dbReference type="GO" id="GO:0046523">
    <property type="term" value="F:S-methyl-5-thioribose-1-phosphate isomerase activity"/>
    <property type="evidence" value="ECO:0007669"/>
    <property type="project" value="UniProtKB-UniRule"/>
</dbReference>
<dbReference type="GO" id="GO:0019509">
    <property type="term" value="P:L-methionine salvage from methylthioadenosine"/>
    <property type="evidence" value="ECO:0007669"/>
    <property type="project" value="UniProtKB-UniRule"/>
</dbReference>
<dbReference type="FunFam" id="1.20.120.420:FF:000003">
    <property type="entry name" value="Methylthioribose-1-phosphate isomerase"/>
    <property type="match status" value="1"/>
</dbReference>
<dbReference type="FunFam" id="3.40.50.10470:FF:000006">
    <property type="entry name" value="Methylthioribose-1-phosphate isomerase"/>
    <property type="match status" value="1"/>
</dbReference>
<dbReference type="Gene3D" id="1.20.120.420">
    <property type="entry name" value="translation initiation factor eif-2b, domain 1"/>
    <property type="match status" value="1"/>
</dbReference>
<dbReference type="Gene3D" id="3.40.50.10470">
    <property type="entry name" value="Translation initiation factor eif-2b, domain 2"/>
    <property type="match status" value="1"/>
</dbReference>
<dbReference type="HAMAP" id="MF_01678">
    <property type="entry name" value="Salvage_MtnA"/>
    <property type="match status" value="1"/>
</dbReference>
<dbReference type="InterPro" id="IPR000649">
    <property type="entry name" value="IF-2B-related"/>
</dbReference>
<dbReference type="InterPro" id="IPR005251">
    <property type="entry name" value="IF-M1Pi"/>
</dbReference>
<dbReference type="InterPro" id="IPR042529">
    <property type="entry name" value="IF_2B-like_C"/>
</dbReference>
<dbReference type="InterPro" id="IPR011559">
    <property type="entry name" value="Initiation_fac_2B_a/b/d"/>
</dbReference>
<dbReference type="InterPro" id="IPR027363">
    <property type="entry name" value="M1Pi_N"/>
</dbReference>
<dbReference type="InterPro" id="IPR037171">
    <property type="entry name" value="NagB/RpiA_transferase-like"/>
</dbReference>
<dbReference type="NCBIfam" id="TIGR00524">
    <property type="entry name" value="eIF-2B_rel"/>
    <property type="match status" value="1"/>
</dbReference>
<dbReference type="NCBIfam" id="NF004326">
    <property type="entry name" value="PRK05720.1"/>
    <property type="match status" value="1"/>
</dbReference>
<dbReference type="NCBIfam" id="TIGR00512">
    <property type="entry name" value="salvage_mtnA"/>
    <property type="match status" value="1"/>
</dbReference>
<dbReference type="PANTHER" id="PTHR43475">
    <property type="entry name" value="METHYLTHIORIBOSE-1-PHOSPHATE ISOMERASE"/>
    <property type="match status" value="1"/>
</dbReference>
<dbReference type="PANTHER" id="PTHR43475:SF1">
    <property type="entry name" value="METHYLTHIORIBOSE-1-PHOSPHATE ISOMERASE"/>
    <property type="match status" value="1"/>
</dbReference>
<dbReference type="Pfam" id="PF01008">
    <property type="entry name" value="IF-2B"/>
    <property type="match status" value="1"/>
</dbReference>
<dbReference type="SUPFAM" id="SSF100950">
    <property type="entry name" value="NagB/RpiA/CoA transferase-like"/>
    <property type="match status" value="1"/>
</dbReference>
<sequence length="311" mass="33872">MNMKTIEWKDGELVLIDQRKLPDSLEYFRCRDYRDVIYAIKNMVVRGAPAIGVTAAFGVAMAELAGEDVEVAAEEIKASRPTAVNLFWAVDRVMKSESPLDEAITMYMEDMETNRAIGRHGAGLIEDGDTVLTHCNAGALACVDYGTALGVIRAAWDDGKRLTVICDETRPVGQGARLSVWEMQQEGIPVKLITDVAAGYLMQTGMIDKVIIGADRIAEGGVANKIGSLMVALAAKRFNVPFYVAAPMSTFDTENSIYDIEIEERDPAEVLYYGGCRIAPQDTEAINPAFDIVPSDLISGIITEKGILDPL</sequence>
<evidence type="ECO:0000255" key="1">
    <source>
        <dbReference type="HAMAP-Rule" id="MF_01678"/>
    </source>
</evidence>
<evidence type="ECO:0000305" key="2"/>
<accession>O27900</accession>
<keyword id="KW-0028">Amino-acid biosynthesis</keyword>
<keyword id="KW-0413">Isomerase</keyword>
<keyword id="KW-0486">Methionine biosynthesis</keyword>
<keyword id="KW-1185">Reference proteome</keyword>
<proteinExistence type="inferred from homology"/>
<comment type="function">
    <text evidence="1">Catalyzes the interconversion of methylthioribose-1-phosphate (MTR-1-P) into methylthioribulose-1-phosphate (MTRu-1-P).</text>
</comment>
<comment type="catalytic activity">
    <reaction evidence="1">
        <text>5-(methylsulfanyl)-alpha-D-ribose 1-phosphate = 5-(methylsulfanyl)-D-ribulose 1-phosphate</text>
        <dbReference type="Rhea" id="RHEA:19989"/>
        <dbReference type="ChEBI" id="CHEBI:58533"/>
        <dbReference type="ChEBI" id="CHEBI:58548"/>
        <dbReference type="EC" id="5.3.1.23"/>
    </reaction>
</comment>
<comment type="similarity">
    <text evidence="2">Belongs to the eIF-2B alpha/beta/delta subunits family. MtnA subfamily.</text>
</comment>
<gene>
    <name type="ordered locus">MTH_1872</name>
</gene>
<reference key="1">
    <citation type="journal article" date="1997" name="J. Bacteriol.">
        <title>Complete genome sequence of Methanobacterium thermoautotrophicum deltaH: functional analysis and comparative genomics.</title>
        <authorList>
            <person name="Smith D.R."/>
            <person name="Doucette-Stamm L.A."/>
            <person name="Deloughery C."/>
            <person name="Lee H.-M."/>
            <person name="Dubois J."/>
            <person name="Aldredge T."/>
            <person name="Bashirzadeh R."/>
            <person name="Blakely D."/>
            <person name="Cook R."/>
            <person name="Gilbert K."/>
            <person name="Harrison D."/>
            <person name="Hoang L."/>
            <person name="Keagle P."/>
            <person name="Lumm W."/>
            <person name="Pothier B."/>
            <person name="Qiu D."/>
            <person name="Spadafora R."/>
            <person name="Vicare R."/>
            <person name="Wang Y."/>
            <person name="Wierzbowski J."/>
            <person name="Gibson R."/>
            <person name="Jiwani N."/>
            <person name="Caruso A."/>
            <person name="Bush D."/>
            <person name="Safer H."/>
            <person name="Patwell D."/>
            <person name="Prabhakar S."/>
            <person name="McDougall S."/>
            <person name="Shimer G."/>
            <person name="Goyal A."/>
            <person name="Pietrovski S."/>
            <person name="Church G.M."/>
            <person name="Daniels C.J."/>
            <person name="Mao J.-I."/>
            <person name="Rice P."/>
            <person name="Noelling J."/>
            <person name="Reeve J.N."/>
        </authorList>
    </citation>
    <scope>NUCLEOTIDE SEQUENCE [LARGE SCALE GENOMIC DNA]</scope>
    <source>
        <strain>ATCC 29096 / DSM 1053 / JCM 10044 / NBRC 100330 / Delta H</strain>
    </source>
</reference>